<reference key="1">
    <citation type="submission" date="2009-02" db="EMBL/GenBank/DDBJ databases">
        <title>Genome sequence of Bacillus cereus 03BB102.</title>
        <authorList>
            <person name="Dodson R.J."/>
            <person name="Jackson P."/>
            <person name="Munk A.C."/>
            <person name="Brettin T."/>
            <person name="Bruce D."/>
            <person name="Detter C."/>
            <person name="Tapia R."/>
            <person name="Han C."/>
            <person name="Sutton G."/>
            <person name="Sims D."/>
        </authorList>
    </citation>
    <scope>NUCLEOTIDE SEQUENCE [LARGE SCALE GENOMIC DNA]</scope>
    <source>
        <strain>03BB102</strain>
    </source>
</reference>
<dbReference type="EMBL" id="CP001407">
    <property type="protein sequence ID" value="ACO28033.1"/>
    <property type="molecule type" value="Genomic_DNA"/>
</dbReference>
<dbReference type="RefSeq" id="WP_000391517.1">
    <property type="nucleotide sequence ID" value="NZ_CP009318.1"/>
</dbReference>
<dbReference type="SMR" id="C1ETP6"/>
<dbReference type="GeneID" id="93006651"/>
<dbReference type="KEGG" id="bcx:BCA_4562"/>
<dbReference type="PATRIC" id="fig|572264.18.peg.4510"/>
<dbReference type="Proteomes" id="UP000002210">
    <property type="component" value="Chromosome"/>
</dbReference>
<dbReference type="GO" id="GO:0000902">
    <property type="term" value="P:cell morphogenesis"/>
    <property type="evidence" value="ECO:0007669"/>
    <property type="project" value="InterPro"/>
</dbReference>
<dbReference type="GO" id="GO:0000917">
    <property type="term" value="P:division septum assembly"/>
    <property type="evidence" value="ECO:0007669"/>
    <property type="project" value="UniProtKB-KW"/>
</dbReference>
<dbReference type="GO" id="GO:1901891">
    <property type="term" value="P:regulation of cell septum assembly"/>
    <property type="evidence" value="ECO:0007669"/>
    <property type="project" value="InterPro"/>
</dbReference>
<dbReference type="FunFam" id="2.160.20.70:FF:000003">
    <property type="entry name" value="Probable septum site-determining protein MinC"/>
    <property type="match status" value="1"/>
</dbReference>
<dbReference type="FunFam" id="3.30.160.540:FF:000001">
    <property type="entry name" value="Probable septum site-determining protein MinC"/>
    <property type="match status" value="1"/>
</dbReference>
<dbReference type="Gene3D" id="2.160.20.70">
    <property type="match status" value="1"/>
</dbReference>
<dbReference type="Gene3D" id="3.30.160.540">
    <property type="match status" value="1"/>
</dbReference>
<dbReference type="HAMAP" id="MF_00267">
    <property type="entry name" value="MinC"/>
    <property type="match status" value="1"/>
</dbReference>
<dbReference type="InterPro" id="IPR016098">
    <property type="entry name" value="CAP/MinC_C"/>
</dbReference>
<dbReference type="InterPro" id="IPR013033">
    <property type="entry name" value="MinC"/>
</dbReference>
<dbReference type="InterPro" id="IPR036145">
    <property type="entry name" value="MinC_C_sf"/>
</dbReference>
<dbReference type="InterPro" id="IPR055219">
    <property type="entry name" value="MinC_N_1"/>
</dbReference>
<dbReference type="InterPro" id="IPR005526">
    <property type="entry name" value="Septum_form_inhib_MinC_C"/>
</dbReference>
<dbReference type="NCBIfam" id="TIGR01222">
    <property type="entry name" value="minC"/>
    <property type="match status" value="1"/>
</dbReference>
<dbReference type="PANTHER" id="PTHR34108">
    <property type="entry name" value="SEPTUM SITE-DETERMINING PROTEIN MINC"/>
    <property type="match status" value="1"/>
</dbReference>
<dbReference type="PANTHER" id="PTHR34108:SF1">
    <property type="entry name" value="SEPTUM SITE-DETERMINING PROTEIN MINC"/>
    <property type="match status" value="1"/>
</dbReference>
<dbReference type="Pfam" id="PF03775">
    <property type="entry name" value="MinC_C"/>
    <property type="match status" value="1"/>
</dbReference>
<dbReference type="Pfam" id="PF22642">
    <property type="entry name" value="MinC_N_1"/>
    <property type="match status" value="1"/>
</dbReference>
<dbReference type="SUPFAM" id="SSF63848">
    <property type="entry name" value="Cell-division inhibitor MinC, C-terminal domain"/>
    <property type="match status" value="1"/>
</dbReference>
<comment type="function">
    <text evidence="1">Cell division inhibitor that blocks the formation of polar Z ring septums. Rapidly oscillates between the poles of the cell to destabilize FtsZ filaments that have formed before they mature into polar Z rings. Prevents FtsZ polymerization.</text>
</comment>
<comment type="subunit">
    <text evidence="1">Interacts with MinD and FtsZ.</text>
</comment>
<comment type="similarity">
    <text evidence="1">Belongs to the MinC family.</text>
</comment>
<evidence type="ECO:0000255" key="1">
    <source>
        <dbReference type="HAMAP-Rule" id="MF_00267"/>
    </source>
</evidence>
<feature type="chain" id="PRO_1000191230" description="Probable septum site-determining protein MinC">
    <location>
        <begin position="1"/>
        <end position="228"/>
    </location>
</feature>
<keyword id="KW-0131">Cell cycle</keyword>
<keyword id="KW-0132">Cell division</keyword>
<keyword id="KW-0717">Septation</keyword>
<proteinExistence type="inferred from homology"/>
<gene>
    <name evidence="1" type="primary">minC</name>
    <name type="ordered locus">BCA_4562</name>
</gene>
<sequence>MEEKKQQNVTIKGTKDGITLHLDDCCSFSELLKELDEKLSTHYYDGDGRSLIEVHVKVGNRYLTEVQQEEIRTLIRNKKNLVVDSIESDVITKEEAIAWKEETEIVPISKIVRSGQVLHVKGNLLLIGDVNPGGTVIAGGNIFVVGSLRGIAHAGYYGDSDAVIAASVMNPMQLRISDVAMRAPEEKEDGAEAAECAYINENNHIVVDRLQLLTHLRPNLTKLERGIV</sequence>
<accession>C1ETP6</accession>
<protein>
    <recommendedName>
        <fullName evidence="1">Probable septum site-determining protein MinC</fullName>
    </recommendedName>
</protein>
<organism>
    <name type="scientific">Bacillus cereus (strain 03BB102)</name>
    <dbReference type="NCBI Taxonomy" id="572264"/>
    <lineage>
        <taxon>Bacteria</taxon>
        <taxon>Bacillati</taxon>
        <taxon>Bacillota</taxon>
        <taxon>Bacilli</taxon>
        <taxon>Bacillales</taxon>
        <taxon>Bacillaceae</taxon>
        <taxon>Bacillus</taxon>
        <taxon>Bacillus cereus group</taxon>
    </lineage>
</organism>
<name>MINC_BACC3</name>